<gene>
    <name type="primary">UL80</name>
    <name type="synonym">APNG</name>
</gene>
<evidence type="ECO:0000250" key="1"/>
<evidence type="ECO:0000250" key="2">
    <source>
        <dbReference type="UniProtKB" id="P16753"/>
    </source>
</evidence>
<evidence type="ECO:0000255" key="3">
    <source>
        <dbReference type="HAMAP-Rule" id="MF_04008"/>
    </source>
</evidence>
<evidence type="ECO:0000256" key="4">
    <source>
        <dbReference type="SAM" id="MobiDB-lite"/>
    </source>
</evidence>
<evidence type="ECO:0000305" key="5"/>
<keyword id="KW-0877">Alternative promoter usage</keyword>
<keyword id="KW-0175">Coiled coil</keyword>
<keyword id="KW-1035">Host cytoplasm</keyword>
<keyword id="KW-1048">Host nucleus</keyword>
<keyword id="KW-0378">Hydrolase</keyword>
<keyword id="KW-0597">Phosphoprotein</keyword>
<keyword id="KW-0645">Protease</keyword>
<keyword id="KW-1185">Reference proteome</keyword>
<keyword id="KW-0720">Serine protease</keyword>
<keyword id="KW-0118">Viral capsid assembly</keyword>
<keyword id="KW-1188">Viral release from host cell</keyword>
<dbReference type="EC" id="3.4.21.97" evidence="3"/>
<dbReference type="EMBL" id="AY446894">
    <property type="protein sequence ID" value="AAR31632.1"/>
    <property type="molecule type" value="Genomic_DNA"/>
</dbReference>
<dbReference type="EMBL" id="AY446894">
    <property type="protein sequence ID" value="AAR31633.1"/>
    <property type="status" value="ALT_INIT"/>
    <property type="molecule type" value="Genomic_DNA"/>
</dbReference>
<dbReference type="RefSeq" id="YP_081528.1">
    <property type="nucleotide sequence ID" value="NC_006273.2"/>
</dbReference>
<dbReference type="SMR" id="Q6SW62"/>
<dbReference type="MEROPS" id="S21.002"/>
<dbReference type="DNASU" id="3077443"/>
<dbReference type="GeneID" id="3077485"/>
<dbReference type="KEGG" id="vg:3077443"/>
<dbReference type="KEGG" id="vg:3077485"/>
<dbReference type="Reactome" id="R-HSA-9610379">
    <property type="pathway name" value="HCMV Late Events"/>
</dbReference>
<dbReference type="Proteomes" id="UP000000938">
    <property type="component" value="Segment"/>
</dbReference>
<dbReference type="GO" id="GO:0030430">
    <property type="term" value="C:host cell cytoplasm"/>
    <property type="evidence" value="ECO:0007669"/>
    <property type="project" value="UniProtKB-SubCell"/>
</dbReference>
<dbReference type="GO" id="GO:0042025">
    <property type="term" value="C:host cell nucleus"/>
    <property type="evidence" value="ECO:0007669"/>
    <property type="project" value="UniProtKB-SubCell"/>
</dbReference>
<dbReference type="GO" id="GO:0019028">
    <property type="term" value="C:viral capsid"/>
    <property type="evidence" value="ECO:0000304"/>
    <property type="project" value="Reactome"/>
</dbReference>
<dbReference type="GO" id="GO:0042802">
    <property type="term" value="F:identical protein binding"/>
    <property type="evidence" value="ECO:0007669"/>
    <property type="project" value="UniProtKB-UniRule"/>
</dbReference>
<dbReference type="GO" id="GO:0004252">
    <property type="term" value="F:serine-type endopeptidase activity"/>
    <property type="evidence" value="ECO:0007669"/>
    <property type="project" value="UniProtKB-UniRule"/>
</dbReference>
<dbReference type="GO" id="GO:0039708">
    <property type="term" value="P:nuclear capsid assembly"/>
    <property type="evidence" value="ECO:0000314"/>
    <property type="project" value="UniProtKB"/>
</dbReference>
<dbReference type="GO" id="GO:0006508">
    <property type="term" value="P:proteolysis"/>
    <property type="evidence" value="ECO:0007669"/>
    <property type="project" value="UniProtKB-KW"/>
</dbReference>
<dbReference type="GO" id="GO:0019076">
    <property type="term" value="P:viral release from host cell"/>
    <property type="evidence" value="ECO:0007669"/>
    <property type="project" value="UniProtKB-UniRule"/>
</dbReference>
<dbReference type="FunFam" id="3.20.16.10:FF:000001">
    <property type="entry name" value="Capsid scaffolding protein"/>
    <property type="match status" value="1"/>
</dbReference>
<dbReference type="Gene3D" id="3.20.16.10">
    <property type="entry name" value="Herpesvirus/Caudovirus protease domain"/>
    <property type="match status" value="1"/>
</dbReference>
<dbReference type="HAMAP" id="MF_04008">
    <property type="entry name" value="HSV_SCAF"/>
    <property type="match status" value="1"/>
</dbReference>
<dbReference type="InterPro" id="IPR035443">
    <property type="entry name" value="Herpes_virus_sf"/>
</dbReference>
<dbReference type="InterPro" id="IPR001847">
    <property type="entry name" value="Peptidase_S21"/>
</dbReference>
<dbReference type="Pfam" id="PF00716">
    <property type="entry name" value="Peptidase_S21"/>
    <property type="match status" value="1"/>
</dbReference>
<dbReference type="PRINTS" id="PR00236">
    <property type="entry name" value="HSVCAPSIDP40"/>
</dbReference>
<dbReference type="SUPFAM" id="SSF50789">
    <property type="entry name" value="Herpes virus serine proteinase, assemblin"/>
    <property type="match status" value="1"/>
</dbReference>
<proteinExistence type="inferred from homology"/>
<reference key="1">
    <citation type="journal article" date="2004" name="J. Gen. Virol.">
        <title>Genetic content of wild-type human cytomegalovirus.</title>
        <authorList>
            <person name="Dolan A."/>
            <person name="Cunningham C."/>
            <person name="Hector R.D."/>
            <person name="Hassan-Walker A.F."/>
            <person name="Lee L."/>
            <person name="Addison C."/>
            <person name="Dargan D.J."/>
            <person name="McGeoch D.J."/>
            <person name="Gatherer D."/>
            <person name="Emery V.C."/>
            <person name="Griffiths P.D."/>
            <person name="Sinzger C."/>
            <person name="McSharry B.P."/>
            <person name="Wilkinson G.W.G."/>
            <person name="Davison A.J."/>
        </authorList>
    </citation>
    <scope>NUCLEOTIDE SEQUENCE [LARGE SCALE GENOMIC DNA]</scope>
</reference>
<accession>Q6SW62</accession>
<accession>D2K3N8</accession>
<accession>D2K3N9</accession>
<accession>Q6SW61</accession>
<name>SCAF_HCMVM</name>
<organismHost>
    <name type="scientific">Homo sapiens</name>
    <name type="common">Human</name>
    <dbReference type="NCBI Taxonomy" id="9606"/>
</organismHost>
<sequence length="708" mass="73838">MTMDEQQSQAVAPVYVGGFLARYDQSPDEAELLLPRDVVEHWLHAQGQGQPSLSVALPLNINHDDTAVVGHVAAMQSVRDGLFCLGCVTSPRFLEIVRRASEKSELVSRGPVSPLQPDKVVEFLSGSYAGLSLSSRRCDDVEAATSLSGSETTPFKHVALCSVGRRRGTLAVYGRDPEWVTQRFPDLTAADRDGLRAQWQRCGSTAVDASGDPFRSDSYGLLGNSVDALYIRERLPKLRYDKQLVGVTERESYVKASVSPEAACVIKAASAERSGDSRSQAATPAAGARVPSSSPSPPVEPPSPVQPPALPASPSVLPAESPPSLSPSEPAEAASMSHPLSAAVPAATAPPGATVAGASPAVSSLAWPHDGVYLPKDAFFSLLGASRSAAPVMYPGAVAAPPSASPAPLPLPSYPASYGAPVVGYDQLAARHFADYVDPHYPGWGRRYEPAPSLHPSYPVPPPPSPAYYRRRDSPGGMDEPPSGWERYDGGHRGQSQKQHRHGGSGGHNKRRKETAAASSSSSDEDLSFPGEAEHGRARKRLKSHVNSDGGSGGHAGSNQQQQQRYDELRDAIHELKRDLFAARQSSTLLSAALPSAASSSPTTTTVCTPTSELTSGGGETPTALLSGGAKVAERAQAGVVNASCRLATASGSEAATAGPSTAGSSSCPASVVLAAAAAQAAAASQSPPKDMVDLNRRIFVAALNKLE</sequence>
<protein>
    <recommendedName>
        <fullName evidence="3">Capsid scaffolding protein</fullName>
    </recommendedName>
    <alternativeName>
        <fullName>Capsid protein P40</fullName>
    </alternativeName>
    <alternativeName>
        <fullName evidence="3">Protease precursor</fullName>
        <shortName evidence="3">pPR</shortName>
    </alternativeName>
    <component>
        <recommendedName>
            <fullName evidence="3">Assemblin</fullName>
            <ecNumber evidence="3">3.4.21.97</ecNumber>
        </recommendedName>
        <alternativeName>
            <fullName evidence="3">Protease</fullName>
            <shortName evidence="3">Pr</shortName>
        </alternativeName>
    </component>
    <component>
        <recommendedName>
            <fullName evidence="3">Assembly protein</fullName>
            <shortName evidence="3">AP</shortName>
        </recommendedName>
        <alternativeName>
            <fullName evidence="3">Capsid assembly protein</fullName>
        </alternativeName>
    </component>
</protein>
<organism>
    <name type="scientific">Human cytomegalovirus (strain Merlin)</name>
    <name type="common">HHV-5</name>
    <name type="synonym">Human herpesvirus 5</name>
    <dbReference type="NCBI Taxonomy" id="295027"/>
    <lineage>
        <taxon>Viruses</taxon>
        <taxon>Duplodnaviria</taxon>
        <taxon>Heunggongvirae</taxon>
        <taxon>Peploviricota</taxon>
        <taxon>Herviviricetes</taxon>
        <taxon>Herpesvirales</taxon>
        <taxon>Orthoherpesviridae</taxon>
        <taxon>Betaherpesvirinae</taxon>
        <taxon>Cytomegalovirus</taxon>
        <taxon>Cytomegalovirus humanbeta5</taxon>
        <taxon>Human cytomegalovirus</taxon>
    </lineage>
</organism>
<comment type="function">
    <molecule>Capsid scaffolding protein</molecule>
    <text evidence="3">Acts as a scaffold protein by binding major capsid protein in the cytoplasm, inducing the nuclear localization of both proteins. Multimerizes in the nucleus such as major capsid protein forms the icosahedral T=16 capsid. Autocatalytic cleavage releases the assembly protein, and subsequently abolishes interaction with major capsid protein. Cleavages products are evicted from the capsid before or during DNA packaging.</text>
</comment>
<comment type="function">
    <molecule>Assemblin</molecule>
    <text evidence="3">Protease that plays an essential role in virion assembly within the nucleus. Catalyzes the cleavage of the assembly protein after formation of the spherical procapsid. By that cleavage, the capsid matures and gains its icosahedral shape. The cleavage sites seem to include -Ala-Ser-, -Ala-Ala-, as well as Ala-Thr bonds. Assemblin and cleavages products are evicted from the capsid before or during DNA packaging.</text>
</comment>
<comment type="function">
    <molecule>Assembly protein</molecule>
    <text evidence="3">Plays a major role in capsid assembly. Acts as a scaffold protein by binding major capsid protein. Multimerizes in the nucleus such as major capsid protein forms the icosahedral T=16 capsid. Cleaved by assemblin after capsid completion. The cleavages products are evicted from the capsid before or during DNA packaging.</text>
</comment>
<comment type="catalytic activity">
    <molecule>Assemblin</molecule>
    <reaction evidence="3">
        <text>Cleaves -Ala-|-Ser- and -Ala-|-Ala- bonds in the scaffold protein.</text>
        <dbReference type="EC" id="3.4.21.97"/>
    </reaction>
</comment>
<comment type="subunit">
    <molecule>Capsid scaffolding protein</molecule>
    <text evidence="3">Homomultimer. Interacts with major capsid protein.</text>
</comment>
<comment type="subunit">
    <molecule>Assemblin</molecule>
    <text evidence="3">Exists in a monomer-dimer equilibrium with the dimer being the active species.</text>
</comment>
<comment type="subunit">
    <molecule>Assembly protein</molecule>
    <text evidence="3">Homomultimer. Interacts with major capsid protein.</text>
</comment>
<comment type="subcellular location">
    <molecule>Capsid scaffolding protein</molecule>
    <subcellularLocation>
        <location evidence="3">Host cytoplasm</location>
    </subcellularLocation>
</comment>
<comment type="subcellular location">
    <molecule>Assemblin</molecule>
    <subcellularLocation>
        <location evidence="3">Host nucleus</location>
    </subcellularLocation>
</comment>
<comment type="subcellular location">
    <molecule>Assembly protein</molecule>
    <subcellularLocation>
        <location evidence="3">Host nucleus</location>
    </subcellularLocation>
</comment>
<comment type="alternative products">
    <event type="alternative promoter"/>
    <isoform>
        <id>Q6SW62-1</id>
        <name>Capsid scaffolding protein</name>
        <name>pPR</name>
        <name>UL80a</name>
        <sequence type="displayed"/>
    </isoform>
    <isoform>
        <id>Q6SW62-2</id>
        <name>pAP</name>
        <name>Assembly protein</name>
        <name>UL80.5</name>
        <sequence type="described" ref="VSP_044019"/>
    </isoform>
    <isoform>
        <id>Q6SW62-3</id>
        <name>UL80.4 protein</name>
        <sequence type="described" ref="VSP_044018"/>
    </isoform>
    <isoform>
        <id>Q6SW62-4</id>
        <name>UL80.3 protein</name>
        <sequence type="described" ref="VSP_044017"/>
    </isoform>
</comment>
<comment type="domain">
    <text evidence="3">Region of interaction between pPR and pAP is called Amino conserved domain (ACD). The region of interaction with major capsid protein is called carboxyl conserved domain (CCD).</text>
</comment>
<comment type="PTM">
    <molecule>Capsid scaffolding protein</molecule>
    <text evidence="3">Capsid scaffolding protein is cleaved by assemblin after formation of the spherical procapsid. As a result, the capsid obtains its mature, icosahedral shape. Cleavages occur at two or more sites: release (R-site) and maturation (M-site).</text>
</comment>
<comment type="similarity">
    <text evidence="3">Belongs to the herpesviridae capsid scaffolding protein family.</text>
</comment>
<comment type="sequence caution" evidence="5">
    <conflict type="erroneous initiation">
        <sequence resource="EMBL-CDS" id="AAR31633"/>
    </conflict>
</comment>
<feature type="chain" id="PRO_0000418270" description="Capsid scaffolding protein">
    <location>
        <begin position="1"/>
        <end position="708"/>
    </location>
</feature>
<feature type="chain" id="PRO_0000418271" description="Assemblin" evidence="3">
    <location>
        <begin position="1"/>
        <end position="256"/>
    </location>
</feature>
<feature type="chain" id="PRO_0000418272" description="Assembly protein" evidence="3">
    <location>
        <begin position="257"/>
        <end position="708"/>
    </location>
</feature>
<feature type="region of interest" description="Disordered" evidence="4">
    <location>
        <begin position="270"/>
        <end position="339"/>
    </location>
</feature>
<feature type="region of interest" description="Interaction with pAP" evidence="3">
    <location>
        <begin position="333"/>
        <end position="352"/>
    </location>
</feature>
<feature type="region of interest" description="Disordered" evidence="4">
    <location>
        <begin position="455"/>
        <end position="565"/>
    </location>
</feature>
<feature type="region of interest" description="Disordered" evidence="4">
    <location>
        <begin position="593"/>
        <end position="620"/>
    </location>
</feature>
<feature type="region of interest" description="Interaction with major capsid protein" evidence="3">
    <location>
        <begin position="688"/>
        <end position="708"/>
    </location>
</feature>
<feature type="short sequence motif" description="Nuclear localization signal 1" evidence="1">
    <location>
        <begin position="510"/>
        <end position="515"/>
    </location>
</feature>
<feature type="short sequence motif" description="Nuclear localization signal 2" evidence="1">
    <location>
        <begin position="537"/>
        <end position="543"/>
    </location>
</feature>
<feature type="compositionally biased region" description="Low complexity" evidence="4">
    <location>
        <begin position="284"/>
        <end position="293"/>
    </location>
</feature>
<feature type="compositionally biased region" description="Pro residues" evidence="4">
    <location>
        <begin position="294"/>
        <end position="311"/>
    </location>
</feature>
<feature type="compositionally biased region" description="Low complexity" evidence="4">
    <location>
        <begin position="326"/>
        <end position="339"/>
    </location>
</feature>
<feature type="compositionally biased region" description="Basic residues" evidence="4">
    <location>
        <begin position="498"/>
        <end position="513"/>
    </location>
</feature>
<feature type="compositionally biased region" description="Low complexity" evidence="4">
    <location>
        <begin position="593"/>
        <end position="615"/>
    </location>
</feature>
<feature type="active site" description="Charge relay system" evidence="3">
    <location>
        <position position="63"/>
    </location>
</feature>
<feature type="active site" description="Charge relay system" evidence="3">
    <location>
        <position position="132"/>
    </location>
</feature>
<feature type="active site" description="Charge relay system" evidence="3">
    <location>
        <position position="157"/>
    </location>
</feature>
<feature type="site" description="Cleavage; by assemblin; Internal site" evidence="2">
    <location>
        <begin position="143"/>
        <end position="144"/>
    </location>
</feature>
<feature type="site" description="Cleavage; by assemblin; Cryptic site" evidence="2">
    <location>
        <begin position="209"/>
        <end position="210"/>
    </location>
</feature>
<feature type="site" description="Cleavage; by assemblin; Release site" evidence="3">
    <location>
        <begin position="275"/>
        <end position="276"/>
    </location>
</feature>
<feature type="site" description="Cleavage; by assemblin; Maturation site" evidence="2">
    <location>
        <begin position="643"/>
        <end position="644"/>
    </location>
</feature>
<feature type="splice variant" id="VSP_044017" description="In isoform UL80.3 protein." evidence="5">
    <location>
        <begin position="1"/>
        <end position="477"/>
    </location>
</feature>
<feature type="splice variant" id="VSP_044018" description="In isoform UL80.4 protein." evidence="5">
    <location>
        <begin position="1"/>
        <end position="392"/>
    </location>
</feature>
<feature type="splice variant" id="VSP_044019" description="In isoform pAP." evidence="5">
    <location>
        <begin position="1"/>
        <end position="335"/>
    </location>
</feature>